<name>RL6_SYMTH</name>
<feature type="chain" id="PRO_0000260958" description="Large ribosomal subunit protein uL6">
    <location>
        <begin position="1"/>
        <end position="178"/>
    </location>
</feature>
<dbReference type="EMBL" id="AP006840">
    <property type="protein sequence ID" value="BAD42042.1"/>
    <property type="molecule type" value="Genomic_DNA"/>
</dbReference>
<dbReference type="RefSeq" id="WP_011197175.1">
    <property type="nucleotide sequence ID" value="NC_006177.1"/>
</dbReference>
<dbReference type="SMR" id="Q67JV8"/>
<dbReference type="STRING" id="292459.STH3060"/>
<dbReference type="KEGG" id="sth:STH3060"/>
<dbReference type="eggNOG" id="COG0097">
    <property type="taxonomic scope" value="Bacteria"/>
</dbReference>
<dbReference type="HOGENOM" id="CLU_065464_1_2_9"/>
<dbReference type="OrthoDB" id="9805007at2"/>
<dbReference type="Proteomes" id="UP000000417">
    <property type="component" value="Chromosome"/>
</dbReference>
<dbReference type="GO" id="GO:0022625">
    <property type="term" value="C:cytosolic large ribosomal subunit"/>
    <property type="evidence" value="ECO:0007669"/>
    <property type="project" value="TreeGrafter"/>
</dbReference>
<dbReference type="GO" id="GO:0019843">
    <property type="term" value="F:rRNA binding"/>
    <property type="evidence" value="ECO:0007669"/>
    <property type="project" value="UniProtKB-UniRule"/>
</dbReference>
<dbReference type="GO" id="GO:0003735">
    <property type="term" value="F:structural constituent of ribosome"/>
    <property type="evidence" value="ECO:0007669"/>
    <property type="project" value="InterPro"/>
</dbReference>
<dbReference type="GO" id="GO:0002181">
    <property type="term" value="P:cytoplasmic translation"/>
    <property type="evidence" value="ECO:0007669"/>
    <property type="project" value="TreeGrafter"/>
</dbReference>
<dbReference type="FunFam" id="3.90.930.12:FF:000001">
    <property type="entry name" value="50S ribosomal protein L6"/>
    <property type="match status" value="1"/>
</dbReference>
<dbReference type="FunFam" id="3.90.930.12:FF:000002">
    <property type="entry name" value="50S ribosomal protein L6"/>
    <property type="match status" value="1"/>
</dbReference>
<dbReference type="Gene3D" id="3.90.930.12">
    <property type="entry name" value="Ribosomal protein L6, alpha-beta domain"/>
    <property type="match status" value="2"/>
</dbReference>
<dbReference type="HAMAP" id="MF_01365_B">
    <property type="entry name" value="Ribosomal_uL6_B"/>
    <property type="match status" value="1"/>
</dbReference>
<dbReference type="InterPro" id="IPR000702">
    <property type="entry name" value="Ribosomal_uL6-like"/>
</dbReference>
<dbReference type="InterPro" id="IPR036789">
    <property type="entry name" value="Ribosomal_uL6-like_a/b-dom_sf"/>
</dbReference>
<dbReference type="InterPro" id="IPR020040">
    <property type="entry name" value="Ribosomal_uL6_a/b-dom"/>
</dbReference>
<dbReference type="InterPro" id="IPR019906">
    <property type="entry name" value="Ribosomal_uL6_bac-type"/>
</dbReference>
<dbReference type="NCBIfam" id="TIGR03654">
    <property type="entry name" value="L6_bact"/>
    <property type="match status" value="1"/>
</dbReference>
<dbReference type="PANTHER" id="PTHR11655">
    <property type="entry name" value="60S/50S RIBOSOMAL PROTEIN L6/L9"/>
    <property type="match status" value="1"/>
</dbReference>
<dbReference type="PANTHER" id="PTHR11655:SF14">
    <property type="entry name" value="LARGE RIBOSOMAL SUBUNIT PROTEIN UL6M"/>
    <property type="match status" value="1"/>
</dbReference>
<dbReference type="Pfam" id="PF00347">
    <property type="entry name" value="Ribosomal_L6"/>
    <property type="match status" value="2"/>
</dbReference>
<dbReference type="PIRSF" id="PIRSF002162">
    <property type="entry name" value="Ribosomal_L6"/>
    <property type="match status" value="1"/>
</dbReference>
<dbReference type="PRINTS" id="PR00059">
    <property type="entry name" value="RIBOSOMALL6"/>
</dbReference>
<dbReference type="SUPFAM" id="SSF56053">
    <property type="entry name" value="Ribosomal protein L6"/>
    <property type="match status" value="2"/>
</dbReference>
<comment type="function">
    <text evidence="1">This protein binds to the 23S rRNA, and is important in its secondary structure. It is located near the subunit interface in the base of the L7/L12 stalk, and near the tRNA binding site of the peptidyltransferase center.</text>
</comment>
<comment type="subunit">
    <text evidence="1">Part of the 50S ribosomal subunit.</text>
</comment>
<comment type="similarity">
    <text evidence="1">Belongs to the universal ribosomal protein uL6 family.</text>
</comment>
<accession>Q67JV8</accession>
<organism>
    <name type="scientific">Symbiobacterium thermophilum (strain DSM 24528 / JCM 14929 / IAM 14863 / T)</name>
    <dbReference type="NCBI Taxonomy" id="292459"/>
    <lineage>
        <taxon>Bacteria</taxon>
        <taxon>Bacillati</taxon>
        <taxon>Bacillota</taxon>
        <taxon>Clostridia</taxon>
        <taxon>Eubacteriales</taxon>
        <taxon>Symbiobacteriaceae</taxon>
        <taxon>Symbiobacterium</taxon>
    </lineage>
</organism>
<sequence length="178" mass="19042">MSRIGKAPIEIPAGVEVTVEGNLVRVKGPKGELSREIHPAMSITIENGALRVSRPSDEREHKALHGLTRTLIANMVEGVTKGYSKTLELVGTGYRAAKTGNQLTLSVGYSHPVVFNPPPGIEFQVPAPNQVIVAGIDKQLVGQVAADIRATRPPEPYLGKGIKYAGEHIRRKVGKAGK</sequence>
<keyword id="KW-1185">Reference proteome</keyword>
<keyword id="KW-0687">Ribonucleoprotein</keyword>
<keyword id="KW-0689">Ribosomal protein</keyword>
<keyword id="KW-0694">RNA-binding</keyword>
<keyword id="KW-0699">rRNA-binding</keyword>
<evidence type="ECO:0000255" key="1">
    <source>
        <dbReference type="HAMAP-Rule" id="MF_01365"/>
    </source>
</evidence>
<evidence type="ECO:0000305" key="2"/>
<gene>
    <name evidence="1" type="primary">rplF</name>
    <name type="ordered locus">STH3060</name>
</gene>
<reference key="1">
    <citation type="journal article" date="2004" name="Nucleic Acids Res.">
        <title>Genome sequence of Symbiobacterium thermophilum, an uncultivable bacterium that depends on microbial commensalism.</title>
        <authorList>
            <person name="Ueda K."/>
            <person name="Yamashita A."/>
            <person name="Ishikawa J."/>
            <person name="Shimada M."/>
            <person name="Watsuji T."/>
            <person name="Morimura K."/>
            <person name="Ikeda H."/>
            <person name="Hattori M."/>
            <person name="Beppu T."/>
        </authorList>
    </citation>
    <scope>NUCLEOTIDE SEQUENCE [LARGE SCALE GENOMIC DNA]</scope>
    <source>
        <strain>DSM 24528 / JCM 14929 / IAM 14863 / T</strain>
    </source>
</reference>
<proteinExistence type="inferred from homology"/>
<protein>
    <recommendedName>
        <fullName evidence="1">Large ribosomal subunit protein uL6</fullName>
    </recommendedName>
    <alternativeName>
        <fullName evidence="2">50S ribosomal protein L6</fullName>
    </alternativeName>
</protein>